<organism>
    <name type="scientific">Mus musculus</name>
    <name type="common">Mouse</name>
    <dbReference type="NCBI Taxonomy" id="10090"/>
    <lineage>
        <taxon>Eukaryota</taxon>
        <taxon>Metazoa</taxon>
        <taxon>Chordata</taxon>
        <taxon>Craniata</taxon>
        <taxon>Vertebrata</taxon>
        <taxon>Euteleostomi</taxon>
        <taxon>Mammalia</taxon>
        <taxon>Eutheria</taxon>
        <taxon>Euarchontoglires</taxon>
        <taxon>Glires</taxon>
        <taxon>Rodentia</taxon>
        <taxon>Myomorpha</taxon>
        <taxon>Muroidea</taxon>
        <taxon>Muridae</taxon>
        <taxon>Murinae</taxon>
        <taxon>Mus</taxon>
        <taxon>Mus</taxon>
    </lineage>
</organism>
<keyword id="KW-0106">Calcium</keyword>
<keyword id="KW-1015">Disulfide bond</keyword>
<keyword id="KW-0378">Hydrolase</keyword>
<keyword id="KW-0442">Lipid degradation</keyword>
<keyword id="KW-0443">Lipid metabolism</keyword>
<keyword id="KW-0479">Metal-binding</keyword>
<keyword id="KW-1185">Reference proteome</keyword>
<keyword id="KW-0964">Secreted</keyword>
<keyword id="KW-0732">Signal</keyword>
<accession>Q6P8U6</accession>
<name>LIPP_MOUSE</name>
<protein>
    <recommendedName>
        <fullName evidence="7">Pancreatic triacylglycerol lipase</fullName>
        <shortName>PL</shortName>
        <shortName>PTL</shortName>
        <shortName>Pancreatic lipase</shortName>
        <ecNumber evidence="6">3.1.1.3</ecNumber>
    </recommendedName>
</protein>
<feature type="signal peptide" evidence="3">
    <location>
        <begin position="1"/>
        <end position="16"/>
    </location>
</feature>
<feature type="chain" id="PRO_0000401139" description="Pancreatic triacylglycerol lipase">
    <location>
        <begin position="17"/>
        <end position="465"/>
    </location>
</feature>
<feature type="domain" description="PLAT" evidence="4">
    <location>
        <begin position="355"/>
        <end position="465"/>
    </location>
</feature>
<feature type="active site" description="Nucleophile" evidence="1">
    <location>
        <position position="169"/>
    </location>
</feature>
<feature type="active site" description="Charge relay system" evidence="5">
    <location>
        <position position="193"/>
    </location>
</feature>
<feature type="active site" description="Charge relay system" evidence="5">
    <location>
        <position position="280"/>
    </location>
</feature>
<feature type="binding site" evidence="1">
    <location>
        <position position="204"/>
    </location>
    <ligand>
        <name>Ca(2+)</name>
        <dbReference type="ChEBI" id="CHEBI:29108"/>
    </ligand>
</feature>
<feature type="binding site" evidence="1">
    <location>
        <position position="207"/>
    </location>
    <ligand>
        <name>Ca(2+)</name>
        <dbReference type="ChEBI" id="CHEBI:29108"/>
    </ligand>
</feature>
<feature type="binding site" evidence="1">
    <location>
        <position position="209"/>
    </location>
    <ligand>
        <name>Ca(2+)</name>
        <dbReference type="ChEBI" id="CHEBI:29108"/>
    </ligand>
</feature>
<feature type="binding site" evidence="1">
    <location>
        <position position="212"/>
    </location>
    <ligand>
        <name>Ca(2+)</name>
        <dbReference type="ChEBI" id="CHEBI:29108"/>
    </ligand>
</feature>
<feature type="disulfide bond" evidence="4">
    <location>
        <begin position="20"/>
        <end position="26"/>
    </location>
</feature>
<feature type="disulfide bond" evidence="4">
    <location>
        <begin position="107"/>
        <end position="118"/>
    </location>
</feature>
<feature type="disulfide bond" evidence="4">
    <location>
        <begin position="254"/>
        <end position="278"/>
    </location>
</feature>
<feature type="disulfide bond" evidence="4">
    <location>
        <begin position="302"/>
        <end position="313"/>
    </location>
</feature>
<feature type="disulfide bond" evidence="4">
    <location>
        <begin position="316"/>
        <end position="321"/>
    </location>
</feature>
<feature type="disulfide bond" evidence="4">
    <location>
        <begin position="449"/>
        <end position="465"/>
    </location>
</feature>
<comment type="function">
    <text evidence="6">Plays an important role in fat metabolism. It preferentially splits the esters of long-chain fatty acids at positions 1 and 3, producing mainly 2-monoacylglycerol and free fatty acids, and shows considerably higher activity against insoluble emulsified substrates than against soluble ones.</text>
</comment>
<comment type="catalytic activity">
    <reaction evidence="6">
        <text>a triacylglycerol + H2O = a diacylglycerol + a fatty acid + H(+)</text>
        <dbReference type="Rhea" id="RHEA:12044"/>
        <dbReference type="ChEBI" id="CHEBI:15377"/>
        <dbReference type="ChEBI" id="CHEBI:15378"/>
        <dbReference type="ChEBI" id="CHEBI:17855"/>
        <dbReference type="ChEBI" id="CHEBI:18035"/>
        <dbReference type="ChEBI" id="CHEBI:28868"/>
        <dbReference type="EC" id="3.1.1.3"/>
    </reaction>
    <physiologicalReaction direction="left-to-right" evidence="8">
        <dbReference type="Rhea" id="RHEA:12045"/>
    </physiologicalReaction>
</comment>
<comment type="catalytic activity">
    <reaction evidence="6">
        <text>1,2,3-tri-(9Z-octadecenoyl)-glycerol + H2O = di-(9Z)-octadecenoylglycerol + (9Z)-octadecenoate + H(+)</text>
        <dbReference type="Rhea" id="RHEA:38575"/>
        <dbReference type="ChEBI" id="CHEBI:15377"/>
        <dbReference type="ChEBI" id="CHEBI:15378"/>
        <dbReference type="ChEBI" id="CHEBI:30823"/>
        <dbReference type="ChEBI" id="CHEBI:53753"/>
        <dbReference type="ChEBI" id="CHEBI:75945"/>
    </reaction>
    <physiologicalReaction direction="left-to-right" evidence="8">
        <dbReference type="Rhea" id="RHEA:38576"/>
    </physiologicalReaction>
</comment>
<comment type="catalytic activity">
    <reaction evidence="2">
        <text>1,2,3-tributanoylglycerol + H2O = dibutanoylglycerol + butanoate + H(+)</text>
        <dbReference type="Rhea" id="RHEA:40475"/>
        <dbReference type="ChEBI" id="CHEBI:15377"/>
        <dbReference type="ChEBI" id="CHEBI:15378"/>
        <dbReference type="ChEBI" id="CHEBI:17968"/>
        <dbReference type="ChEBI" id="CHEBI:35020"/>
        <dbReference type="ChEBI" id="CHEBI:76478"/>
    </reaction>
    <physiologicalReaction direction="left-to-right" evidence="2">
        <dbReference type="Rhea" id="RHEA:40476"/>
    </physiologicalReaction>
</comment>
<comment type="catalytic activity">
    <reaction evidence="2">
        <text>all-trans-retinyl hexadecanoate + H2O = all-trans-retinol + hexadecanoate + H(+)</text>
        <dbReference type="Rhea" id="RHEA:13933"/>
        <dbReference type="ChEBI" id="CHEBI:7896"/>
        <dbReference type="ChEBI" id="CHEBI:15377"/>
        <dbReference type="ChEBI" id="CHEBI:15378"/>
        <dbReference type="ChEBI" id="CHEBI:17336"/>
        <dbReference type="ChEBI" id="CHEBI:17616"/>
    </reaction>
    <physiologicalReaction direction="left-to-right" evidence="2">
        <dbReference type="Rhea" id="RHEA:13934"/>
    </physiologicalReaction>
</comment>
<comment type="catalytic activity">
    <reaction evidence="2">
        <text>1,2-di-(9Z-octadecenoyl)-glycerol + H2O = (9Z-octadecenoyl)-glycerol + (9Z)-octadecenoate + H(+)</text>
        <dbReference type="Rhea" id="RHEA:38455"/>
        <dbReference type="ChEBI" id="CHEBI:15377"/>
        <dbReference type="ChEBI" id="CHEBI:15378"/>
        <dbReference type="ChEBI" id="CHEBI:30823"/>
        <dbReference type="ChEBI" id="CHEBI:52323"/>
        <dbReference type="ChEBI" id="CHEBI:75937"/>
    </reaction>
    <physiologicalReaction direction="left-to-right" evidence="2">
        <dbReference type="Rhea" id="RHEA:38456"/>
    </physiologicalReaction>
</comment>
<comment type="activity regulation">
    <text evidence="6">Inhibited by bile salts, is reactivated by (pro)colipase/CLPS.</text>
</comment>
<comment type="subunit">
    <text evidence="2">Forms a 1:1 stoichiometric complex with (pro)colipase/CLPS.</text>
</comment>
<comment type="subcellular location">
    <subcellularLocation>
        <location evidence="2">Secreted</location>
    </subcellularLocation>
</comment>
<comment type="tissue specificity">
    <text evidence="6">Pancreas.</text>
</comment>
<comment type="similarity">
    <text evidence="7">Belongs to the AB hydrolase superfamily. Lipase family.</text>
</comment>
<sequence length="465" mass="51428">MLMLWTFAVLLGAVAGREVCFDKLGCFSDDAPWSGTLDRPLKALPWSPAQINTRFLLYTNENPDNYQLITSDASNIRNSNFRTNRKTRIIIHGFIDKGEENWLSDMCKNMFRVESVNCICVDWKGGSRTTYTQATQNVRVVGAEVALLVNVLQSDLGYSLNNVHLIGHSLGSHIAGEAGKRTFGAIGRITGLDPAEPYFQGTPEEVRLDPTDAQFVDAIHTDAGPIIPNLGFGMSQTVGHLDFFPNGGIEMPGCQKNILSQIVDIDGIWEGTRNFAACNHLRSYKFYTDSIVNPTGFAGFSCSSYSLFTANKCFPCGSGGCPQMGHYADRYPGKTSRLYQTFYLNTGDKSNFARWRYQVTVTLSGQKVTGHILVSLFGNGGNSKQYEVFKGSLQPGTSHVNEFDSDVDVGDLQKVKFIWYNNVINPTLPKVGASRITVERNDGRVFNFCSQETVREDVLLTLSPC</sequence>
<reference key="1">
    <citation type="journal article" date="2004" name="Am. J. Physiol.">
        <title>Feeding activates protein synthesis in mouse pancreas at the translational level without increase in mRNA.</title>
        <authorList>
            <person name="Sans M.D."/>
            <person name="Lee S.H."/>
            <person name="D'Alecy L.G."/>
            <person name="Williams J.A."/>
        </authorList>
    </citation>
    <scope>NUCLEOTIDE SEQUENCE [MRNA]</scope>
    <source>
        <strain>ICR</strain>
    </source>
</reference>
<reference key="2">
    <citation type="submission" date="2005-07" db="EMBL/GenBank/DDBJ databases">
        <authorList>
            <person name="Mural R.J."/>
            <person name="Adams M.D."/>
            <person name="Myers E.W."/>
            <person name="Smith H.O."/>
            <person name="Venter J.C."/>
        </authorList>
    </citation>
    <scope>NUCLEOTIDE SEQUENCE [LARGE SCALE GENOMIC DNA]</scope>
</reference>
<reference key="3">
    <citation type="journal article" date="2004" name="Genome Res.">
        <title>The status, quality, and expansion of the NIH full-length cDNA project: the Mammalian Gene Collection (MGC).</title>
        <authorList>
            <consortium name="The MGC Project Team"/>
        </authorList>
    </citation>
    <scope>NUCLEOTIDE SEQUENCE [LARGE SCALE MRNA]</scope>
    <source>
        <tissue>Liver</tissue>
    </source>
</reference>
<reference key="4">
    <citation type="journal article" date="2000" name="Biochemistry">
        <title>Hydrolysis of retinyl esters by pancreatic triglyceride lipase.</title>
        <authorList>
            <person name="van Bennekum A.M."/>
            <person name="Fisher E.A."/>
            <person name="Blaner W.S."/>
            <person name="Harrison E.H."/>
        </authorList>
    </citation>
    <scope>CATALYTIC ACTIVITY</scope>
    <scope>TISSUE SPECIFICITY</scope>
    <scope>FUNCTION</scope>
    <scope>ACTIVITY REGULATION</scope>
</reference>
<reference key="5">
    <citation type="journal article" date="2010" name="Cell">
        <title>A tissue-specific atlas of mouse protein phosphorylation and expression.</title>
        <authorList>
            <person name="Huttlin E.L."/>
            <person name="Jedrychowski M.P."/>
            <person name="Elias J.E."/>
            <person name="Goswami T."/>
            <person name="Rad R."/>
            <person name="Beausoleil S.A."/>
            <person name="Villen J."/>
            <person name="Haas W."/>
            <person name="Sowa M.E."/>
            <person name="Gygi S.P."/>
        </authorList>
    </citation>
    <scope>IDENTIFICATION BY MASS SPECTROMETRY [LARGE SCALE ANALYSIS]</scope>
    <source>
        <tissue>Liver</tissue>
        <tissue>Lung</tissue>
        <tissue>Pancreas</tissue>
        <tissue>Spleen</tissue>
    </source>
</reference>
<proteinExistence type="evidence at protein level"/>
<dbReference type="EC" id="3.1.1.3" evidence="6"/>
<dbReference type="EMBL" id="AY387690">
    <property type="protein sequence ID" value="AAQ90020.1"/>
    <property type="molecule type" value="mRNA"/>
</dbReference>
<dbReference type="EMBL" id="CH466585">
    <property type="protein sequence ID" value="EDL01803.1"/>
    <property type="molecule type" value="Genomic_DNA"/>
</dbReference>
<dbReference type="EMBL" id="BC061061">
    <property type="protein sequence ID" value="AAH61061.1"/>
    <property type="molecule type" value="mRNA"/>
</dbReference>
<dbReference type="CCDS" id="CCDS29930.1"/>
<dbReference type="RefSeq" id="NP_081201.2">
    <property type="nucleotide sequence ID" value="NM_026925.3"/>
</dbReference>
<dbReference type="SMR" id="Q6P8U6"/>
<dbReference type="FunCoup" id="Q6P8U6">
    <property type="interactions" value="349"/>
</dbReference>
<dbReference type="STRING" id="10090.ENSMUSP00000056377"/>
<dbReference type="ESTHER" id="mouse-1plip">
    <property type="family name" value="Pancreatic_lipase"/>
</dbReference>
<dbReference type="iPTMnet" id="Q6P8U6"/>
<dbReference type="PhosphoSitePlus" id="Q6P8U6"/>
<dbReference type="PaxDb" id="10090-ENSMUSP00000056377"/>
<dbReference type="ProteomicsDB" id="292261"/>
<dbReference type="Antibodypedia" id="18720">
    <property type="antibodies" value="551 antibodies from 36 providers"/>
</dbReference>
<dbReference type="DNASU" id="69060"/>
<dbReference type="Ensembl" id="ENSMUST00000057270.9">
    <property type="protein sequence ID" value="ENSMUSP00000056377.8"/>
    <property type="gene ID" value="ENSMUSG00000046008.9"/>
</dbReference>
<dbReference type="GeneID" id="69060"/>
<dbReference type="KEGG" id="mmu:69060"/>
<dbReference type="UCSC" id="uc008iaq.1">
    <property type="organism name" value="mouse"/>
</dbReference>
<dbReference type="AGR" id="MGI:97722"/>
<dbReference type="CTD" id="5406"/>
<dbReference type="MGI" id="MGI:97722">
    <property type="gene designation" value="Pnlip"/>
</dbReference>
<dbReference type="VEuPathDB" id="HostDB:ENSMUSG00000046008"/>
<dbReference type="eggNOG" id="ENOG502QUK7">
    <property type="taxonomic scope" value="Eukaryota"/>
</dbReference>
<dbReference type="GeneTree" id="ENSGT00940000160632"/>
<dbReference type="HOGENOM" id="CLU_027171_0_2_1"/>
<dbReference type="InParanoid" id="Q6P8U6"/>
<dbReference type="OMA" id="EPWVQGH"/>
<dbReference type="OrthoDB" id="199913at2759"/>
<dbReference type="PhylomeDB" id="Q6P8U6"/>
<dbReference type="TreeFam" id="TF324997"/>
<dbReference type="Reactome" id="R-MMU-192456">
    <property type="pathway name" value="Digestion of dietary lipid"/>
</dbReference>
<dbReference type="Reactome" id="R-MMU-975634">
    <property type="pathway name" value="Retinoid metabolism and transport"/>
</dbReference>
<dbReference type="BioGRID-ORCS" id="69060">
    <property type="hits" value="5 hits in 80 CRISPR screens"/>
</dbReference>
<dbReference type="ChiTaRS" id="Pnlip">
    <property type="organism name" value="mouse"/>
</dbReference>
<dbReference type="PRO" id="PR:Q6P8U6"/>
<dbReference type="Proteomes" id="UP000000589">
    <property type="component" value="Chromosome 19"/>
</dbReference>
<dbReference type="RNAct" id="Q6P8U6">
    <property type="molecule type" value="protein"/>
</dbReference>
<dbReference type="Bgee" id="ENSMUSG00000046008">
    <property type="expression patterns" value="Expressed in pyloric antrum and 50 other cell types or tissues"/>
</dbReference>
<dbReference type="ExpressionAtlas" id="Q6P8U6">
    <property type="expression patterns" value="baseline and differential"/>
</dbReference>
<dbReference type="GO" id="GO:0005615">
    <property type="term" value="C:extracellular space"/>
    <property type="evidence" value="ECO:0007669"/>
    <property type="project" value="Ensembl"/>
</dbReference>
<dbReference type="GO" id="GO:0047376">
    <property type="term" value="F:all-trans-retinyl-palmitate hydrolase, all-trans-retinol forming activity"/>
    <property type="evidence" value="ECO:0007669"/>
    <property type="project" value="RHEA"/>
</dbReference>
<dbReference type="GO" id="GO:0046872">
    <property type="term" value="F:metal ion binding"/>
    <property type="evidence" value="ECO:0007669"/>
    <property type="project" value="UniProtKB-KW"/>
</dbReference>
<dbReference type="GO" id="GO:0050253">
    <property type="term" value="F:retinyl-palmitate esterase activity"/>
    <property type="evidence" value="ECO:0000314"/>
    <property type="project" value="MGI"/>
</dbReference>
<dbReference type="GO" id="GO:0004806">
    <property type="term" value="F:triacylglycerol lipase activity"/>
    <property type="evidence" value="ECO:0000314"/>
    <property type="project" value="UniProtKB"/>
</dbReference>
<dbReference type="GO" id="GO:0030299">
    <property type="term" value="P:intestinal cholesterol absorption"/>
    <property type="evidence" value="ECO:0000315"/>
    <property type="project" value="MGI"/>
</dbReference>
<dbReference type="GO" id="GO:0016042">
    <property type="term" value="P:lipid catabolic process"/>
    <property type="evidence" value="ECO:0007669"/>
    <property type="project" value="UniProtKB-KW"/>
</dbReference>
<dbReference type="GO" id="GO:0001523">
    <property type="term" value="P:retinoid metabolic process"/>
    <property type="evidence" value="ECO:0000315"/>
    <property type="project" value="MGI"/>
</dbReference>
<dbReference type="CDD" id="cd00707">
    <property type="entry name" value="Pancreat_lipase_like"/>
    <property type="match status" value="1"/>
</dbReference>
<dbReference type="CDD" id="cd01759">
    <property type="entry name" value="PLAT_PL"/>
    <property type="match status" value="1"/>
</dbReference>
<dbReference type="FunFam" id="3.40.50.1820:FF:000033">
    <property type="entry name" value="Pancreatic triacylglycerol lipase"/>
    <property type="match status" value="1"/>
</dbReference>
<dbReference type="FunFam" id="2.60.60.20:FF:000003">
    <property type="entry name" value="Triacylglycerol lipase"/>
    <property type="match status" value="1"/>
</dbReference>
<dbReference type="Gene3D" id="3.40.50.1820">
    <property type="entry name" value="alpha/beta hydrolase"/>
    <property type="match status" value="1"/>
</dbReference>
<dbReference type="Gene3D" id="2.60.60.20">
    <property type="entry name" value="PLAT/LH2 domain"/>
    <property type="match status" value="1"/>
</dbReference>
<dbReference type="InterPro" id="IPR029058">
    <property type="entry name" value="AB_hydrolase_fold"/>
</dbReference>
<dbReference type="InterPro" id="IPR013818">
    <property type="entry name" value="Lipase"/>
</dbReference>
<dbReference type="InterPro" id="IPR016272">
    <property type="entry name" value="Lipase_LIPH"/>
</dbReference>
<dbReference type="InterPro" id="IPR033906">
    <property type="entry name" value="Lipase_N"/>
</dbReference>
<dbReference type="InterPro" id="IPR002331">
    <property type="entry name" value="Lipase_panc"/>
</dbReference>
<dbReference type="InterPro" id="IPR001024">
    <property type="entry name" value="PLAT/LH2_dom"/>
</dbReference>
<dbReference type="InterPro" id="IPR036392">
    <property type="entry name" value="PLAT/LH2_dom_sf"/>
</dbReference>
<dbReference type="InterPro" id="IPR000734">
    <property type="entry name" value="TAG_lipase"/>
</dbReference>
<dbReference type="PANTHER" id="PTHR11610">
    <property type="entry name" value="LIPASE"/>
    <property type="match status" value="1"/>
</dbReference>
<dbReference type="PANTHER" id="PTHR11610:SF147">
    <property type="entry name" value="PANCREATIC TRIACYLGLYCEROL LIPASE"/>
    <property type="match status" value="1"/>
</dbReference>
<dbReference type="Pfam" id="PF00151">
    <property type="entry name" value="Lipase"/>
    <property type="match status" value="1"/>
</dbReference>
<dbReference type="Pfam" id="PF01477">
    <property type="entry name" value="PLAT"/>
    <property type="match status" value="1"/>
</dbReference>
<dbReference type="PIRSF" id="PIRSF000865">
    <property type="entry name" value="Lipoprotein_lipase_LIPH"/>
    <property type="match status" value="1"/>
</dbReference>
<dbReference type="PRINTS" id="PR00823">
    <property type="entry name" value="PANCLIPASE"/>
</dbReference>
<dbReference type="PRINTS" id="PR00821">
    <property type="entry name" value="TAGLIPASE"/>
</dbReference>
<dbReference type="SMART" id="SM00308">
    <property type="entry name" value="LH2"/>
    <property type="match status" value="1"/>
</dbReference>
<dbReference type="SUPFAM" id="SSF53474">
    <property type="entry name" value="alpha/beta-Hydrolases"/>
    <property type="match status" value="1"/>
</dbReference>
<dbReference type="SUPFAM" id="SSF49723">
    <property type="entry name" value="Lipase/lipooxygenase domain (PLAT/LH2 domain)"/>
    <property type="match status" value="1"/>
</dbReference>
<dbReference type="PROSITE" id="PS00120">
    <property type="entry name" value="LIPASE_SER"/>
    <property type="match status" value="1"/>
</dbReference>
<dbReference type="PROSITE" id="PS50095">
    <property type="entry name" value="PLAT"/>
    <property type="match status" value="1"/>
</dbReference>
<evidence type="ECO:0000250" key="1"/>
<evidence type="ECO:0000250" key="2">
    <source>
        <dbReference type="UniProtKB" id="P16233"/>
    </source>
</evidence>
<evidence type="ECO:0000255" key="3"/>
<evidence type="ECO:0000255" key="4">
    <source>
        <dbReference type="PROSITE-ProRule" id="PRU00152"/>
    </source>
</evidence>
<evidence type="ECO:0000255" key="5">
    <source>
        <dbReference type="PROSITE-ProRule" id="PRU10037"/>
    </source>
</evidence>
<evidence type="ECO:0000269" key="6">
    <source>
    </source>
</evidence>
<evidence type="ECO:0000305" key="7"/>
<evidence type="ECO:0000305" key="8">
    <source>
    </source>
</evidence>
<evidence type="ECO:0000312" key="9">
    <source>
        <dbReference type="MGI" id="MGI:97722"/>
    </source>
</evidence>
<gene>
    <name evidence="9" type="primary">Pnlip</name>
</gene>